<organism>
    <name type="scientific">Araneus ventricosus</name>
    <name type="common">Orbweaver spider</name>
    <name type="synonym">Epeira ventricosa</name>
    <dbReference type="NCBI Taxonomy" id="182803"/>
    <lineage>
        <taxon>Eukaryota</taxon>
        <taxon>Metazoa</taxon>
        <taxon>Ecdysozoa</taxon>
        <taxon>Arthropoda</taxon>
        <taxon>Chelicerata</taxon>
        <taxon>Arachnida</taxon>
        <taxon>Araneae</taxon>
        <taxon>Araneomorphae</taxon>
        <taxon>Entelegynae</taxon>
        <taxon>Araneoidea</taxon>
        <taxon>Araneidae</taxon>
        <taxon>Araneus</taxon>
    </lineage>
</organism>
<keyword id="KW-0800">Toxin</keyword>
<feature type="chain" id="PRO_0000388750" description="U2-aranetoxin-Av1a" evidence="4">
    <location>
        <begin position="1"/>
        <end position="64"/>
    </location>
</feature>
<comment type="function">
    <text evidence="1">Insecticidal toxin.</text>
</comment>
<comment type="tissue specificity">
    <text evidence="1">Expressed in fat body, but not in cephalothorax, silk gland, midgut.</text>
</comment>
<comment type="miscellaneous">
    <text>Since this peptide has no sequence signal, its secretion is unsure.</text>
</comment>
<name>TXAA2_ARAVE</name>
<evidence type="ECO:0000269" key="1">
    <source ref="1"/>
</evidence>
<evidence type="ECO:0000303" key="2">
    <source ref="1"/>
</evidence>
<evidence type="ECO:0000305" key="3"/>
<evidence type="ECO:0000305" key="4">
    <source ref="1"/>
</evidence>
<dbReference type="EMBL" id="AY091483">
    <property type="protein sequence ID" value="AAM14404.1"/>
    <property type="molecule type" value="mRNA"/>
</dbReference>
<dbReference type="SMR" id="Q8T3S6"/>
<dbReference type="ArachnoServer" id="AS000113">
    <property type="toxin name" value="U2-aranetoxin-Av1a"/>
</dbReference>
<dbReference type="GO" id="GO:0090729">
    <property type="term" value="F:toxin activity"/>
    <property type="evidence" value="ECO:0007669"/>
    <property type="project" value="UniProtKB-KW"/>
</dbReference>
<reference key="1">
    <citation type="journal article" date="2002" name="Int. J. Ind. Entomol.">
        <title>Molecular cloning of two cDNAs encoding an insecticidal toxin from the spider, Araneus ventricosus, and construction of a recombinant baculovirus expressing a spider toxin.</title>
        <authorList>
            <person name="Jung E.H."/>
            <person name="Lee K.S."/>
            <person name="Han J.H."/>
            <person name="Je Y.H."/>
            <person name="Chang J.H."/>
            <person name="Roh J.Y."/>
            <person name="Sohn H.D."/>
            <person name="Jin B.R."/>
        </authorList>
    </citation>
    <scope>NUCLEOTIDE SEQUENCE [MRNA]</scope>
    <scope>FUNCTION</scope>
    <scope>RECOMBINANT EXPRESSION</scope>
    <source>
        <tissue>Venom gland</tissue>
    </source>
</reference>
<accession>Q8T3S6</accession>
<sequence>MALALLGLTIKPEHVPEGTGKAVADVEALACDPAQCMRSCPFNPFLNQYGGICKNGQCVCVKPS</sequence>
<proteinExistence type="evidence at transcript level"/>
<protein>
    <recommendedName>
        <fullName evidence="3">U2-aranetoxin-Av1a</fullName>
        <shortName evidence="3">U2-AATX-Av1a</shortName>
    </recommendedName>
    <alternativeName>
        <fullName>Toxin 2</fullName>
        <shortName evidence="2">AvTox-2</shortName>
    </alternativeName>
</protein>